<proteinExistence type="evidence at protein level"/>
<organism>
    <name type="scientific">Mus musculus</name>
    <name type="common">Mouse</name>
    <dbReference type="NCBI Taxonomy" id="10090"/>
    <lineage>
        <taxon>Eukaryota</taxon>
        <taxon>Metazoa</taxon>
        <taxon>Chordata</taxon>
        <taxon>Craniata</taxon>
        <taxon>Vertebrata</taxon>
        <taxon>Euteleostomi</taxon>
        <taxon>Mammalia</taxon>
        <taxon>Eutheria</taxon>
        <taxon>Euarchontoglires</taxon>
        <taxon>Glires</taxon>
        <taxon>Rodentia</taxon>
        <taxon>Myomorpha</taxon>
        <taxon>Muroidea</taxon>
        <taxon>Muridae</taxon>
        <taxon>Murinae</taxon>
        <taxon>Mus</taxon>
        <taxon>Mus</taxon>
    </lineage>
</organism>
<evidence type="ECO:0000255" key="1"/>
<evidence type="ECO:0000255" key="2">
    <source>
        <dbReference type="PROSITE-ProRule" id="PRU00041"/>
    </source>
</evidence>
<evidence type="ECO:0000269" key="3">
    <source>
    </source>
</evidence>
<evidence type="ECO:0000305" key="4"/>
<name>FR1L5_MOUSE</name>
<sequence>MLRVVVESASINPPLSTTPKAFVTVYFRDMMKRTRVEEGHDPIWNETLIWHLWNQPLENDSFLKVILQDSVSKKKERFIGLATVPLKRLAQRPKEVMFVRDLILLNHSMKPTNCTVTLHVAQIYDQDTEMTGNEELLGSTVNEVTQKKLMVSGLPMHRALASKPQHFQVRVKVFEARQLLGNNIKPVVKVNIADQQHLTRIKMGNNPFFNEIFFQNFHEVPAKFFEENISIEVVDSAASRSKAEIGRFQTDIGFIYHSPGHTLLRKWLGLCQRNKTTSGVRGYLKVTICALGVGDQALVDQKLPYEQNTRVQIFKSKEVPVSLAYLQFFIYCAEDLHFGTHKSATPVLEVELIGDKLRTKPQNPSDNPIWNQILTFQIQLPCLSSYIKFRVMDCSKYKCQDEIGSASLCLSQISSTGEEIQGMYSGFLPCFGPSFLTLRGGKKPPFRTSEEGTCIMDAVQHGLAYRGRIFVEIVTKIKSQQDSVMKDLSQEVTQVEMQYYRQKYGLCVIFLSCTMMPKFKDLIQFEVSMGHYGNKTDPNYKPLVSTTQYSPVIYDGTTYHYVPWYNTKPVVAVTSNWEDVGFRMNCLNLLHITRDRLKTNLDILKSIRNPRDPALLQQWEKLLKELQEDCRRPLPCMTDQPRANSLDRNKWQLRSQLLQQLAQMAKEAKPVNMVGTAKEWLHRLNAVIPEPQESLPDVLIWLMSRQQRVAYARVPAHTVLFSPAGPLSSGKFCGKIQNILLQYPEGEGQDTFPASLRVCMWLGNVKYSKNLKLLQQGSMVVYAETYENQAKTRDDWGQQGLYHCPNFSDVMGRKALPKTDFKAPPGWHWKDDWVVEPQRRLLLDIDINKSQVLEEVYENQLRNATGAWVPAAIPNTDVNGQPVEALENVKCPQGWHFKKNWIVKLNHAVDSEGWEYGVGIPPSGLPQIWNSVEKTYHSCRRRRWVRVRFRNHKELGQERSQEQETLSFLQMQDLSEEGKEGWEYGTFDSRFHLDPQPTSRFRRRCWHRQLAPNKDRGVASIFLLEGSLAVEQKDQPRKEMEKTRSWQPWKDLRHTPEDPRIPTTPFIYYILNKPHYYQLFCYIYQARNLMYNQILTFQEPFIQVVFLNHSLCTQTLRSSAAPTWSQSIIFQHLLLFEDPKDTRENPPLVVLELWQHDSRGNKILWGRSMWPPVVWLGLQDWVFTPLRWHPLVRELGEEEGEILASCELILETQKLKELHPPILSIPCKDGIYLLPKNIQPTMKMMAIEIMAWGLRNMTKVRYPQLLLECGGESLKTEPISNFQENPNFPTSTFFFTVFMPLEETHAQPLVVKVVDNQEYGQQIVVGQANIDFLQPYFCDPWSLNYTTVKLPTLSVKKPDTFLDFVYKKFWFDSSKDEEVYEEEVDWWSKLFWATGDADKSLNYNHKSYHTLKVYDCELEAVLTFKGLQDFCQTFKLYQEKPKVDSPVVGEFKGLFRIYPFPEDPEAPKPPRQFSAWPEIEDFPQMCLVRVYLIRAINLQPQDYNGLCDPYVILKLGQTKLGSRDSYYPNTLDPIFGMMYELTCNIPLEKDLEIQLFDFDLITADDEIGSTVIDLENRLLSGFGARCGLSKSYCKSGPFKWRDQMTPSYLLYRYAKQKGLPPPVFDLEGDSLYYNGETFKLQSFESAPPTYKHLGPKKERLALYILNTQGLVPEHVETRTLHSNSQPGIDQGKIQMWVDIFPKMLGPPGPQVNISPRKPKRYQLRCIIWSTAEVDLVQETFSKEKMSDIYVKGWLFGLEEDTQKTDVHYHSLTGEATFNWRFIFTMDYLTTERACVQSQKDYIWSLDPTSTKFPARLMIQIWDNDFFSPDDFLGVLELDLSDMPLPAQNIKQCSLKMMETDSKWPFTPQKRISLFKKTNVTGWWPCQVLDGDKWRLSGKVKMTLEMLSEREALIRPAGRGQSEPNQFPMLHPPERNDSFLLWYQSPIKNFCYAVCKRYRSKIICLVVTLVIGFILLNFVYSAPSYFAMNWIKPQLRLSSPIKIVNLIGTVNTSNINSSILTMEGSTYHASHVFPEAPAP</sequence>
<reference key="1">
    <citation type="journal article" date="2011" name="J. Biol. Chem.">
        <title>Endocytic recycling proteins EHD1 and EHD2 interact with fer-1-like-5 (Fer1L5) and mediate myoblast fusion.</title>
        <authorList>
            <person name="Posey A.D. Jr."/>
            <person name="Pytel P."/>
            <person name="Gardikiotes K."/>
            <person name="Demonbreun A.R."/>
            <person name="Rainey M."/>
            <person name="George M."/>
            <person name="Band H."/>
            <person name="McNally E.M."/>
        </authorList>
    </citation>
    <scope>NUCLEOTIDE SEQUENCE [MRNA]</scope>
    <scope>FUNCTION</scope>
    <scope>INTERACTION WITH EHD1 AND EHD2</scope>
    <scope>SUBCELLULAR LOCATION</scope>
    <scope>INDUCTION</scope>
    <scope>MUTAGENESIS OF ASN-206 AND 206-ASN--PHE-208</scope>
    <scope>TISSUE SPECIFICITY</scope>
    <source>
        <tissue>Testis</tissue>
    </source>
</reference>
<reference key="2">
    <citation type="journal article" date="2009" name="PLoS Biol.">
        <title>Lineage-specific biology revealed by a finished genome assembly of the mouse.</title>
        <authorList>
            <person name="Church D.M."/>
            <person name="Goodstadt L."/>
            <person name="Hillier L.W."/>
            <person name="Zody M.C."/>
            <person name="Goldstein S."/>
            <person name="She X."/>
            <person name="Bult C.J."/>
            <person name="Agarwala R."/>
            <person name="Cherry J.L."/>
            <person name="DiCuccio M."/>
            <person name="Hlavina W."/>
            <person name="Kapustin Y."/>
            <person name="Meric P."/>
            <person name="Maglott D."/>
            <person name="Birtle Z."/>
            <person name="Marques A.C."/>
            <person name="Graves T."/>
            <person name="Zhou S."/>
            <person name="Teague B."/>
            <person name="Potamousis K."/>
            <person name="Churas C."/>
            <person name="Place M."/>
            <person name="Herschleb J."/>
            <person name="Runnheim R."/>
            <person name="Forrest D."/>
            <person name="Amos-Landgraf J."/>
            <person name="Schwartz D.C."/>
            <person name="Cheng Z."/>
            <person name="Lindblad-Toh K."/>
            <person name="Eichler E.E."/>
            <person name="Ponting C.P."/>
        </authorList>
    </citation>
    <scope>NUCLEOTIDE SEQUENCE [LARGE SCALE GENOMIC DNA]</scope>
    <source>
        <strain>C57BL/6J</strain>
    </source>
</reference>
<comment type="function">
    <text evidence="3">Plays a role in myoblast fusion; probable mediator of endocytic recycling for membrane trafficking events during myotube formation.</text>
</comment>
<comment type="cofactor">
    <cofactor evidence="2">
        <name>Ca(2+)</name>
        <dbReference type="ChEBI" id="CHEBI:29108"/>
    </cofactor>
</comment>
<comment type="subunit">
    <text evidence="3">Interacts (via second C2 domain) with EHD1 and EHD2.</text>
</comment>
<comment type="subcellular location">
    <subcellularLocation>
        <location evidence="3">Cell membrane</location>
    </subcellularLocation>
    <subcellularLocation>
        <location evidence="4">Membrane</location>
        <topology evidence="4">Single-pass membrane protein</topology>
    </subcellularLocation>
    <text>Colocalizes with EHD1 and EHD2 at the plasma membrane in myoblasts and myotubes. Localizes into foci at the plasma membrane.</text>
</comment>
<comment type="tissue specificity">
    <text evidence="3">Expressed in differentiating myoblasts and myotubes.</text>
</comment>
<comment type="induction">
    <text evidence="3">Up-regulated during myotube formation.</text>
</comment>
<comment type="similarity">
    <text evidence="4">Belongs to the ferlin family.</text>
</comment>
<feature type="chain" id="PRO_0000422647" description="Fer-1-like protein 5">
    <location>
        <begin position="1"/>
        <end position="2038"/>
    </location>
</feature>
<feature type="transmembrane region" description="Helical" evidence="1">
    <location>
        <begin position="1961"/>
        <end position="1981"/>
    </location>
</feature>
<feature type="domain" description="C2 1" evidence="2">
    <location>
        <begin position="1"/>
        <end position="100"/>
    </location>
</feature>
<feature type="domain" description="C2 2" evidence="2">
    <location>
        <begin position="145"/>
        <end position="265"/>
    </location>
</feature>
<feature type="domain" description="C2 3" evidence="2">
    <location>
        <begin position="307"/>
        <end position="424"/>
    </location>
</feature>
<feature type="domain" description="C2 4" evidence="2">
    <location>
        <begin position="1055"/>
        <end position="1186"/>
    </location>
</feature>
<feature type="domain" description="C2 5" evidence="2">
    <location>
        <begin position="1225"/>
        <end position="1345"/>
    </location>
</feature>
<feature type="domain" description="C2 6" evidence="2">
    <location>
        <begin position="1467"/>
        <end position="1587"/>
    </location>
</feature>
<feature type="domain" description="C2 7" evidence="2">
    <location>
        <begin position="1705"/>
        <end position="1853"/>
    </location>
</feature>
<feature type="binding site" evidence="2">
    <location>
        <position position="1502"/>
    </location>
    <ligand>
        <name>Ca(2+)</name>
        <dbReference type="ChEBI" id="CHEBI:29108"/>
        <label>1</label>
    </ligand>
</feature>
<feature type="binding site" evidence="2">
    <location>
        <position position="1502"/>
    </location>
    <ligand>
        <name>Ca(2+)</name>
        <dbReference type="ChEBI" id="CHEBI:29108"/>
        <label>2</label>
    </ligand>
</feature>
<feature type="binding site" evidence="2">
    <location>
        <position position="1508"/>
    </location>
    <ligand>
        <name>Ca(2+)</name>
        <dbReference type="ChEBI" id="CHEBI:29108"/>
        <label>1</label>
    </ligand>
</feature>
<feature type="binding site" evidence="2">
    <location>
        <position position="1557"/>
    </location>
    <ligand>
        <name>Ca(2+)</name>
        <dbReference type="ChEBI" id="CHEBI:29108"/>
        <label>1</label>
    </ligand>
</feature>
<feature type="binding site" evidence="2">
    <location>
        <position position="1557"/>
    </location>
    <ligand>
        <name>Ca(2+)</name>
        <dbReference type="ChEBI" id="CHEBI:29108"/>
        <label>2</label>
    </ligand>
</feature>
<feature type="binding site" evidence="2">
    <location>
        <position position="1558"/>
    </location>
    <ligand>
        <name>Ca(2+)</name>
        <dbReference type="ChEBI" id="CHEBI:29108"/>
        <label>1</label>
    </ligand>
</feature>
<feature type="binding site" evidence="2">
    <location>
        <position position="1559"/>
    </location>
    <ligand>
        <name>Ca(2+)</name>
        <dbReference type="ChEBI" id="CHEBI:29108"/>
        <label>1</label>
    </ligand>
</feature>
<feature type="binding site" evidence="2">
    <location>
        <position position="1559"/>
    </location>
    <ligand>
        <name>Ca(2+)</name>
        <dbReference type="ChEBI" id="CHEBI:29108"/>
        <label>2</label>
    </ligand>
</feature>
<feature type="binding site" evidence="2">
    <location>
        <position position="1565"/>
    </location>
    <ligand>
        <name>Ca(2+)</name>
        <dbReference type="ChEBI" id="CHEBI:29108"/>
        <label>2</label>
    </ligand>
</feature>
<feature type="binding site" evidence="2">
    <location>
        <position position="1824"/>
    </location>
    <ligand>
        <name>Ca(2+)</name>
        <dbReference type="ChEBI" id="CHEBI:29108"/>
        <label>3</label>
    </ligand>
</feature>
<feature type="binding site" evidence="2">
    <location>
        <position position="1827"/>
    </location>
    <ligand>
        <name>Ca(2+)</name>
        <dbReference type="ChEBI" id="CHEBI:29108"/>
        <label>3</label>
    </ligand>
</feature>
<feature type="binding site" evidence="2">
    <location>
        <position position="1830"/>
    </location>
    <ligand>
        <name>Ca(2+)</name>
        <dbReference type="ChEBI" id="CHEBI:29108"/>
        <label>3</label>
    </ligand>
</feature>
<feature type="mutagenesis site" description="Reduces interaction with EHD2." evidence="3">
    <original>NPF</original>
    <variation>SPL</variation>
    <location>
        <begin position="206"/>
        <end position="208"/>
    </location>
</feature>
<feature type="mutagenesis site" description="Reduces interaction with EHD2." evidence="3">
    <original>N</original>
    <variation>C</variation>
    <location>
        <position position="206"/>
    </location>
</feature>
<feature type="sequence conflict" description="In Ref. 1; AGE83049." evidence="4" ref="1">
    <original>E</original>
    <variation>K</variation>
    <location>
        <position position="1025"/>
    </location>
</feature>
<feature type="sequence conflict" description="In Ref. 1; AGE83049." evidence="4" ref="1">
    <original>N</original>
    <variation>K</variation>
    <location>
        <position position="1161"/>
    </location>
</feature>
<feature type="sequence conflict" description="In Ref. 1; AGE83049." evidence="4" ref="1">
    <original>V</original>
    <variation>A</variation>
    <location>
        <position position="1310"/>
    </location>
</feature>
<feature type="sequence conflict" description="In Ref. 1; AGE83049." evidence="4" ref="1">
    <original>F</original>
    <variation>S</variation>
    <location>
        <position position="1556"/>
    </location>
</feature>
<feature type="sequence conflict" description="In Ref. 1; AGE83049." evidence="4" ref="1">
    <original>F</original>
    <variation>S</variation>
    <location>
        <position position="1582"/>
    </location>
</feature>
<feature type="sequence conflict" description="In Ref. 1; AGE83049." evidence="4" ref="1">
    <original>T</original>
    <variation>A</variation>
    <location>
        <position position="1739"/>
    </location>
</feature>
<feature type="sequence conflict" description="In Ref. 1; AGE83049." evidence="4" ref="1">
    <original>W</original>
    <variation>R</variation>
    <location>
        <position position="1803"/>
    </location>
</feature>
<feature type="sequence conflict" description="In Ref. 1; AGE83049." evidence="4" ref="1">
    <original>F</original>
    <variation>I</variation>
    <location>
        <position position="1831"/>
    </location>
</feature>
<feature type="sequence conflict" description="In Ref. 1; AGE83049." evidence="4" ref="1">
    <original>L</original>
    <variation>H</variation>
    <location>
        <position position="1975"/>
    </location>
</feature>
<dbReference type="EMBL" id="KC440916">
    <property type="protein sequence ID" value="AGE83049.1"/>
    <property type="molecule type" value="mRNA"/>
</dbReference>
<dbReference type="EMBL" id="GL456084">
    <property type="status" value="NOT_ANNOTATED_CDS"/>
    <property type="molecule type" value="Genomic_DNA"/>
</dbReference>
<dbReference type="CCDS" id="CCDS78562.1"/>
<dbReference type="RefSeq" id="NP_001264005.1">
    <property type="nucleotide sequence ID" value="NM_001277076.3"/>
</dbReference>
<dbReference type="SMR" id="P0DM40"/>
<dbReference type="FunCoup" id="P0DM40">
    <property type="interactions" value="1"/>
</dbReference>
<dbReference type="STRING" id="10090.ENSMUSP00000142130"/>
<dbReference type="PhosphoSitePlus" id="P0DM40"/>
<dbReference type="jPOST" id="P0DM40"/>
<dbReference type="ProteomicsDB" id="267515"/>
<dbReference type="Antibodypedia" id="73876">
    <property type="antibodies" value="13 antibodies from 8 providers"/>
</dbReference>
<dbReference type="Ensembl" id="ENSMUST00000179162.7">
    <property type="protein sequence ID" value="ENSMUSP00000142130.2"/>
    <property type="gene ID" value="ENSMUSG00000037432.16"/>
</dbReference>
<dbReference type="GeneID" id="100534273"/>
<dbReference type="KEGG" id="mmu:100534273"/>
<dbReference type="UCSC" id="uc033fip.1">
    <property type="organism name" value="mouse"/>
</dbReference>
<dbReference type="AGR" id="MGI:3616091"/>
<dbReference type="CTD" id="90342"/>
<dbReference type="MGI" id="MGI:3616091">
    <property type="gene designation" value="Fer1l5"/>
</dbReference>
<dbReference type="VEuPathDB" id="HostDB:ENSMUSG00000037432"/>
<dbReference type="GeneTree" id="ENSGT00940000161318"/>
<dbReference type="HOGENOM" id="CLU_001183_2_1_1"/>
<dbReference type="InParanoid" id="P0DM40"/>
<dbReference type="OMA" id="SEGWEYG"/>
<dbReference type="OrthoDB" id="270970at2759"/>
<dbReference type="BioGRID-ORCS" id="100534273">
    <property type="hits" value="1 hit in 66 CRISPR screens"/>
</dbReference>
<dbReference type="PRO" id="PR:P0DM40"/>
<dbReference type="Proteomes" id="UP000000589">
    <property type="component" value="Chromosome 1"/>
</dbReference>
<dbReference type="RNAct" id="P0DM40">
    <property type="molecule type" value="protein"/>
</dbReference>
<dbReference type="Bgee" id="ENSMUSG00000037432">
    <property type="expression patterns" value="Expressed in spermatid and 61 other cell types or tissues"/>
</dbReference>
<dbReference type="ExpressionAtlas" id="P0DM40">
    <property type="expression patterns" value="baseline and differential"/>
</dbReference>
<dbReference type="GO" id="GO:0005886">
    <property type="term" value="C:plasma membrane"/>
    <property type="evidence" value="ECO:0007669"/>
    <property type="project" value="UniProtKB-SubCell"/>
</dbReference>
<dbReference type="GO" id="GO:0046872">
    <property type="term" value="F:metal ion binding"/>
    <property type="evidence" value="ECO:0007669"/>
    <property type="project" value="UniProtKB-KW"/>
</dbReference>
<dbReference type="CDD" id="cd04011">
    <property type="entry name" value="C2B_Ferlin"/>
    <property type="match status" value="1"/>
</dbReference>
<dbReference type="CDD" id="cd04017">
    <property type="entry name" value="C2D_Ferlin"/>
    <property type="match status" value="1"/>
</dbReference>
<dbReference type="CDD" id="cd04037">
    <property type="entry name" value="C2E_Ferlin"/>
    <property type="match status" value="1"/>
</dbReference>
<dbReference type="CDD" id="cd08374">
    <property type="entry name" value="C2F_Ferlin"/>
    <property type="match status" value="1"/>
</dbReference>
<dbReference type="Gene3D" id="2.60.40.150">
    <property type="entry name" value="C2 domain"/>
    <property type="match status" value="6"/>
</dbReference>
<dbReference type="InterPro" id="IPR000008">
    <property type="entry name" value="C2_dom"/>
</dbReference>
<dbReference type="InterPro" id="IPR035892">
    <property type="entry name" value="C2_domain_sf"/>
</dbReference>
<dbReference type="InterPro" id="IPR037720">
    <property type="entry name" value="C2B_Ferlin"/>
</dbReference>
<dbReference type="InterPro" id="IPR037723">
    <property type="entry name" value="C2D_Ferlin"/>
</dbReference>
<dbReference type="InterPro" id="IPR037724">
    <property type="entry name" value="C2E_Ferlin"/>
</dbReference>
<dbReference type="InterPro" id="IPR037725">
    <property type="entry name" value="C2F_Ferlin"/>
</dbReference>
<dbReference type="InterPro" id="IPR012968">
    <property type="entry name" value="FerIin_dom"/>
</dbReference>
<dbReference type="InterPro" id="IPR037721">
    <property type="entry name" value="Ferlin"/>
</dbReference>
<dbReference type="InterPro" id="IPR012560">
    <property type="entry name" value="Ferlin_A-domain"/>
</dbReference>
<dbReference type="InterPro" id="IPR012561">
    <property type="entry name" value="Ferlin_B-domain"/>
</dbReference>
<dbReference type="InterPro" id="IPR032362">
    <property type="entry name" value="Ferlin_C"/>
</dbReference>
<dbReference type="InterPro" id="IPR055072">
    <property type="entry name" value="Ferlin_DSRM"/>
</dbReference>
<dbReference type="InterPro" id="IPR006614">
    <property type="entry name" value="Peroxin/Ferlin"/>
</dbReference>
<dbReference type="PANTHER" id="PTHR12546">
    <property type="entry name" value="FER-1-LIKE"/>
    <property type="match status" value="1"/>
</dbReference>
<dbReference type="PANTHER" id="PTHR12546:SF34">
    <property type="entry name" value="FER-1-LIKE PROTEIN 5"/>
    <property type="match status" value="1"/>
</dbReference>
<dbReference type="Pfam" id="PF00168">
    <property type="entry name" value="C2"/>
    <property type="match status" value="7"/>
</dbReference>
<dbReference type="Pfam" id="PF22901">
    <property type="entry name" value="dsrm_Ferlin"/>
    <property type="match status" value="1"/>
</dbReference>
<dbReference type="Pfam" id="PF08165">
    <property type="entry name" value="FerA"/>
    <property type="match status" value="1"/>
</dbReference>
<dbReference type="Pfam" id="PF08150">
    <property type="entry name" value="FerB"/>
    <property type="match status" value="1"/>
</dbReference>
<dbReference type="Pfam" id="PF16165">
    <property type="entry name" value="Ferlin_C"/>
    <property type="match status" value="1"/>
</dbReference>
<dbReference type="SMART" id="SM00239">
    <property type="entry name" value="C2"/>
    <property type="match status" value="6"/>
</dbReference>
<dbReference type="SMART" id="SM00694">
    <property type="entry name" value="DysFC"/>
    <property type="match status" value="2"/>
</dbReference>
<dbReference type="SMART" id="SM00693">
    <property type="entry name" value="DysFN"/>
    <property type="match status" value="2"/>
</dbReference>
<dbReference type="SMART" id="SM01200">
    <property type="entry name" value="FerA"/>
    <property type="match status" value="1"/>
</dbReference>
<dbReference type="SMART" id="SM01201">
    <property type="entry name" value="FerB"/>
    <property type="match status" value="1"/>
</dbReference>
<dbReference type="SMART" id="SM01202">
    <property type="entry name" value="FerI"/>
    <property type="match status" value="1"/>
</dbReference>
<dbReference type="SUPFAM" id="SSF49562">
    <property type="entry name" value="C2 domain (Calcium/lipid-binding domain, CaLB)"/>
    <property type="match status" value="7"/>
</dbReference>
<dbReference type="PROSITE" id="PS50004">
    <property type="entry name" value="C2"/>
    <property type="match status" value="7"/>
</dbReference>
<keyword id="KW-0106">Calcium</keyword>
<keyword id="KW-1003">Cell membrane</keyword>
<keyword id="KW-0472">Membrane</keyword>
<keyword id="KW-0479">Metal-binding</keyword>
<keyword id="KW-1185">Reference proteome</keyword>
<keyword id="KW-0677">Repeat</keyword>
<keyword id="KW-0812">Transmembrane</keyword>
<keyword id="KW-1133">Transmembrane helix</keyword>
<accession>P0DM40</accession>
<accession>M1J7P7</accession>
<gene>
    <name type="primary">Fer1l5</name>
</gene>
<protein>
    <recommendedName>
        <fullName>Fer-1-like protein 5</fullName>
    </recommendedName>
</protein>